<sequence length="543" mass="61445">MATTLDLKSKEEKDAELDKRIEALRRKNEALIRRYQEIEEDRKKAELEGVAVTAPRKSRSMEKENMAVEEKSLGPSRRTPGTPRPPGASRGGRTHPQQGGRAGVGRASQGWEDGAGEQLRGGPGGRGRRGRGRGSPHLLGAGDNSTSDRKSKEWEERRRQNIEKMNEEMEKIAEYERNQREGVLEPNPVRNFLDDPRRRGGPLEESERDRREGSRRHGRNWGGSDFERVRSGLEQERQGRRAGLGSGGDMTMSMTGRERSEYLRWKQEREKIDQERLQRHRKPTGQWRREWDAEKTDGMFKDGPAPTHELSHRYDDQAWARPPKPPTFGEFLSQHKAEVSSRRRRKNSRPQAKVAPRAYSDHDNRWETREEAVSSAPESSQSISLEETPTQASETPAPAHRPPEEDGEEDVGEEEEGEEEGEDEEDEEWEDVSEDVTEEEEEEEEEFEEDEEGPKDQEAATVPDHQPEAEPAGKPTCEQVDPVPAGSQELLSPVPVEPPIPFSPSEDHQPVSDWGEEMELNSPGTAHLPGTHSSGEAWPFANA</sequence>
<keyword id="KW-0175">Coiled coil</keyword>
<keyword id="KW-0488">Methylation</keyword>
<keyword id="KW-0597">Phosphoprotein</keyword>
<keyword id="KW-1185">Reference proteome</keyword>
<reference key="1">
    <citation type="journal article" date="2004" name="Genome Res.">
        <title>The status, quality, and expansion of the NIH full-length cDNA project: the Mammalian Gene Collection (MGC).</title>
        <authorList>
            <consortium name="The MGC Project Team"/>
        </authorList>
    </citation>
    <scope>NUCLEOTIDE SEQUENCE [LARGE SCALE MRNA]</scope>
    <source>
        <tissue>Retina</tissue>
    </source>
</reference>
<reference key="2">
    <citation type="journal article" date="2014" name="Mol. Cell. Proteomics">
        <title>Immunoaffinity enrichment and mass spectrometry analysis of protein methylation.</title>
        <authorList>
            <person name="Guo A."/>
            <person name="Gu H."/>
            <person name="Zhou J."/>
            <person name="Mulhern D."/>
            <person name="Wang Y."/>
            <person name="Lee K.A."/>
            <person name="Yang V."/>
            <person name="Aguiar M."/>
            <person name="Kornhauser J."/>
            <person name="Jia X."/>
            <person name="Ren J."/>
            <person name="Beausoleil S.A."/>
            <person name="Silva J.C."/>
            <person name="Vemulapalli V."/>
            <person name="Bedford M.T."/>
            <person name="Comb M.J."/>
        </authorList>
    </citation>
    <scope>METHYLATION [LARGE SCALE ANALYSIS] AT ARG-106; ARG-120; ARG-126 AND ARG-128</scope>
    <scope>IDENTIFICATION BY MASS SPECTROMETRY [LARGE SCALE ANALYSIS]</scope>
    <source>
        <tissue>Embryo</tissue>
    </source>
</reference>
<comment type="function">
    <text evidence="1">Probable component of the exon junction complex (EJC), a multiprotein complex that associates immediately upstream of the exon-exon junction on mRNAs and serves as a positional landmark for the intron exon structure of genes and directs post-transcriptional processes in the cytoplasm such as mRNA export, nonsense-mediated mRNA decay (NMD) or translation.</text>
</comment>
<comment type="subunit">
    <text evidence="1">Probable component of the exon junction complex (EJC); the association is RNA-dependent.</text>
</comment>
<name>CCDC9_MOUSE</name>
<organism>
    <name type="scientific">Mus musculus</name>
    <name type="common">Mouse</name>
    <dbReference type="NCBI Taxonomy" id="10090"/>
    <lineage>
        <taxon>Eukaryota</taxon>
        <taxon>Metazoa</taxon>
        <taxon>Chordata</taxon>
        <taxon>Craniata</taxon>
        <taxon>Vertebrata</taxon>
        <taxon>Euteleostomi</taxon>
        <taxon>Mammalia</taxon>
        <taxon>Eutheria</taxon>
        <taxon>Euarchontoglires</taxon>
        <taxon>Glires</taxon>
        <taxon>Rodentia</taxon>
        <taxon>Myomorpha</taxon>
        <taxon>Muroidea</taxon>
        <taxon>Muridae</taxon>
        <taxon>Murinae</taxon>
        <taxon>Mus</taxon>
        <taxon>Mus</taxon>
    </lineage>
</organism>
<proteinExistence type="evidence at protein level"/>
<gene>
    <name type="primary">Ccdc9</name>
</gene>
<evidence type="ECO:0000250" key="1">
    <source>
        <dbReference type="UniProtKB" id="Q9Y3X0"/>
    </source>
</evidence>
<evidence type="ECO:0000255" key="2"/>
<evidence type="ECO:0000256" key="3">
    <source>
        <dbReference type="SAM" id="MobiDB-lite"/>
    </source>
</evidence>
<evidence type="ECO:0007744" key="4">
    <source>
    </source>
</evidence>
<dbReference type="EMBL" id="BC021915">
    <property type="protein sequence ID" value="AAH21915.1"/>
    <property type="molecule type" value="mRNA"/>
</dbReference>
<dbReference type="CCDS" id="CCDS39784.2"/>
<dbReference type="RefSeq" id="NP_001369343.2">
    <property type="nucleotide sequence ID" value="NM_001382414.3"/>
</dbReference>
<dbReference type="RefSeq" id="NP_758501.3">
    <property type="nucleotide sequence ID" value="NM_172297.2"/>
</dbReference>
<dbReference type="SMR" id="Q8VC31"/>
<dbReference type="BioGRID" id="232567">
    <property type="interactions" value="44"/>
</dbReference>
<dbReference type="FunCoup" id="Q8VC31">
    <property type="interactions" value="718"/>
</dbReference>
<dbReference type="STRING" id="10090.ENSMUSP00000114088"/>
<dbReference type="iPTMnet" id="Q8VC31"/>
<dbReference type="PhosphoSitePlus" id="Q8VC31"/>
<dbReference type="PaxDb" id="10090-ENSMUSP00000114088"/>
<dbReference type="ProteomicsDB" id="281421"/>
<dbReference type="Pumba" id="Q8VC31"/>
<dbReference type="Ensembl" id="ENSMUST00000041010.16">
    <property type="protein sequence ID" value="ENSMUSP00000035597.10"/>
    <property type="gene ID" value="ENSMUSG00000041375.20"/>
</dbReference>
<dbReference type="GeneID" id="243846"/>
<dbReference type="KEGG" id="mmu:243846"/>
<dbReference type="AGR" id="MGI:1921443"/>
<dbReference type="CTD" id="26093"/>
<dbReference type="MGI" id="MGI:1921443">
    <property type="gene designation" value="Ccdc9"/>
</dbReference>
<dbReference type="eggNOG" id="ENOG502QUM9">
    <property type="taxonomic scope" value="Eukaryota"/>
</dbReference>
<dbReference type="GeneTree" id="ENSGT00530000063950"/>
<dbReference type="InParanoid" id="Q8VC31"/>
<dbReference type="BioGRID-ORCS" id="243846">
    <property type="hits" value="3 hits in 76 CRISPR screens"/>
</dbReference>
<dbReference type="ChiTaRS" id="Ccdc9">
    <property type="organism name" value="mouse"/>
</dbReference>
<dbReference type="PRO" id="PR:Q8VC31"/>
<dbReference type="Proteomes" id="UP000000589">
    <property type="component" value="Chromosome 7"/>
</dbReference>
<dbReference type="RNAct" id="Q8VC31">
    <property type="molecule type" value="protein"/>
</dbReference>
<dbReference type="GO" id="GO:0035145">
    <property type="term" value="C:exon-exon junction complex"/>
    <property type="evidence" value="ECO:0000250"/>
    <property type="project" value="UniProtKB"/>
</dbReference>
<dbReference type="GO" id="GO:0003723">
    <property type="term" value="F:RNA binding"/>
    <property type="evidence" value="ECO:0000250"/>
    <property type="project" value="UniProtKB"/>
</dbReference>
<dbReference type="InterPro" id="IPR029336">
    <property type="entry name" value="DUF4594"/>
</dbReference>
<dbReference type="PANTHER" id="PTHR15635">
    <property type="entry name" value="COILED-COIL DOMAIN CONTAINING PROTEIN 9"/>
    <property type="match status" value="1"/>
</dbReference>
<dbReference type="PANTHER" id="PTHR15635:SF11">
    <property type="entry name" value="COILED-COIL DOMAIN-CONTAINING PROTEIN 9"/>
    <property type="match status" value="1"/>
</dbReference>
<dbReference type="Pfam" id="PF15266">
    <property type="entry name" value="DUF4594"/>
    <property type="match status" value="1"/>
</dbReference>
<accession>Q8VC31</accession>
<feature type="chain" id="PRO_0000089404" description="Coiled-coil domain-containing protein 9">
    <location>
        <begin position="1"/>
        <end position="543"/>
    </location>
</feature>
<feature type="region of interest" description="Disordered" evidence="3">
    <location>
        <begin position="38"/>
        <end position="543"/>
    </location>
</feature>
<feature type="coiled-coil region" evidence="2">
    <location>
        <begin position="147"/>
        <end position="183"/>
    </location>
</feature>
<feature type="coiled-coil region" evidence="2">
    <location>
        <begin position="422"/>
        <end position="452"/>
    </location>
</feature>
<feature type="compositionally biased region" description="Basic and acidic residues" evidence="3">
    <location>
        <begin position="38"/>
        <end position="47"/>
    </location>
</feature>
<feature type="compositionally biased region" description="Basic and acidic residues" evidence="3">
    <location>
        <begin position="59"/>
        <end position="72"/>
    </location>
</feature>
<feature type="compositionally biased region" description="Basic and acidic residues" evidence="3">
    <location>
        <begin position="146"/>
        <end position="183"/>
    </location>
</feature>
<feature type="compositionally biased region" description="Basic and acidic residues" evidence="3">
    <location>
        <begin position="192"/>
        <end position="212"/>
    </location>
</feature>
<feature type="compositionally biased region" description="Basic and acidic residues" evidence="3">
    <location>
        <begin position="225"/>
        <end position="239"/>
    </location>
</feature>
<feature type="compositionally biased region" description="Basic and acidic residues" evidence="3">
    <location>
        <begin position="256"/>
        <end position="277"/>
    </location>
</feature>
<feature type="compositionally biased region" description="Basic and acidic residues" evidence="3">
    <location>
        <begin position="287"/>
        <end position="300"/>
    </location>
</feature>
<feature type="compositionally biased region" description="Basic and acidic residues" evidence="3">
    <location>
        <begin position="309"/>
        <end position="318"/>
    </location>
</feature>
<feature type="compositionally biased region" description="Basic and acidic residues" evidence="3">
    <location>
        <begin position="359"/>
        <end position="372"/>
    </location>
</feature>
<feature type="compositionally biased region" description="Polar residues" evidence="3">
    <location>
        <begin position="376"/>
        <end position="394"/>
    </location>
</feature>
<feature type="compositionally biased region" description="Acidic residues" evidence="3">
    <location>
        <begin position="405"/>
        <end position="453"/>
    </location>
</feature>
<feature type="modified residue" description="Phosphothreonine" evidence="1">
    <location>
        <position position="94"/>
    </location>
</feature>
<feature type="modified residue" description="Omega-N-methylarginine" evidence="4">
    <location>
        <position position="106"/>
    </location>
</feature>
<feature type="modified residue" description="Omega-N-methylarginine" evidence="4">
    <location>
        <position position="120"/>
    </location>
</feature>
<feature type="modified residue" description="Omega-N-methylarginine" evidence="4">
    <location>
        <position position="126"/>
    </location>
</feature>
<feature type="modified residue" description="Omega-N-methylarginine" evidence="4">
    <location>
        <position position="128"/>
    </location>
</feature>
<feature type="modified residue" description="Asymmetric dimethylarginine" evidence="1">
    <location>
        <position position="129"/>
    </location>
</feature>
<feature type="modified residue" description="Asymmetric dimethylarginine" evidence="1">
    <location>
        <position position="131"/>
    </location>
</feature>
<feature type="modified residue" description="Asymmetric dimethylarginine" evidence="1">
    <location>
        <position position="133"/>
    </location>
</feature>
<feature type="modified residue" description="Phosphoserine" evidence="1">
    <location>
        <position position="135"/>
    </location>
</feature>
<feature type="modified residue" description="Phosphoserine" evidence="1">
    <location>
        <position position="246"/>
    </location>
</feature>
<feature type="modified residue" description="Phosphoserine" evidence="1">
    <location>
        <position position="253"/>
    </location>
</feature>
<feature type="modified residue" description="Phosphoserine" evidence="1">
    <location>
        <position position="374"/>
    </location>
</feature>
<feature type="modified residue" description="Phosphoserine" evidence="1">
    <location>
        <position position="384"/>
    </location>
</feature>
<feature type="modified residue" description="Phosphoserine" evidence="1">
    <location>
        <position position="533"/>
    </location>
</feature>
<protein>
    <recommendedName>
        <fullName>Coiled-coil domain-containing protein 9</fullName>
    </recommendedName>
</protein>